<evidence type="ECO:0000255" key="1">
    <source>
        <dbReference type="HAMAP-Rule" id="MF_00060"/>
    </source>
</evidence>
<keyword id="KW-0963">Cytoplasm</keyword>
<keyword id="KW-0378">Hydrolase</keyword>
<keyword id="KW-0479">Metal-binding</keyword>
<keyword id="KW-0547">Nucleotide-binding</keyword>
<keyword id="KW-1185">Reference proteome</keyword>
<sequence>MKKILLTNDDGYHAKGIKALEQALEEMAEIYVVAPKHEKSACSQCITITAPLRAEKIKGKEGRHYRIDDGTPSDCVYLAINELFKHVCFDLVISGINLGSNMGEDTIYSGTVAGAIEGTIQGVPSIAISQILSNKNKNTPLSFDLAQKIIQDLVQNIFKNGYPLKGRKLLNVNVPNCSLQEYKGERITPKGYRLYKKEVHKRTDPKNESYFWLGLHPLEWQKRENEDRLSDFDAIASNHASITPLNLDLTSYDDLKSLESWHEGMLK</sequence>
<protein>
    <recommendedName>
        <fullName evidence="1">5'-nucleotidase SurE</fullName>
        <ecNumber evidence="1">3.1.3.5</ecNumber>
    </recommendedName>
    <alternativeName>
        <fullName evidence="1">Nucleoside 5'-monophosphate phosphohydrolase</fullName>
    </alternativeName>
</protein>
<accession>B5Z7T4</accession>
<organism>
    <name type="scientific">Helicobacter pylori (strain G27)</name>
    <dbReference type="NCBI Taxonomy" id="563041"/>
    <lineage>
        <taxon>Bacteria</taxon>
        <taxon>Pseudomonadati</taxon>
        <taxon>Campylobacterota</taxon>
        <taxon>Epsilonproteobacteria</taxon>
        <taxon>Campylobacterales</taxon>
        <taxon>Helicobacteraceae</taxon>
        <taxon>Helicobacter</taxon>
    </lineage>
</organism>
<feature type="chain" id="PRO_1000092009" description="5'-nucleotidase SurE">
    <location>
        <begin position="1"/>
        <end position="267"/>
    </location>
</feature>
<feature type="binding site" evidence="1">
    <location>
        <position position="9"/>
    </location>
    <ligand>
        <name>a divalent metal cation</name>
        <dbReference type="ChEBI" id="CHEBI:60240"/>
    </ligand>
</feature>
<feature type="binding site" evidence="1">
    <location>
        <position position="10"/>
    </location>
    <ligand>
        <name>a divalent metal cation</name>
        <dbReference type="ChEBI" id="CHEBI:60240"/>
    </ligand>
</feature>
<feature type="binding site" evidence="1">
    <location>
        <position position="40"/>
    </location>
    <ligand>
        <name>a divalent metal cation</name>
        <dbReference type="ChEBI" id="CHEBI:60240"/>
    </ligand>
</feature>
<feature type="binding site" evidence="1">
    <location>
        <position position="97"/>
    </location>
    <ligand>
        <name>a divalent metal cation</name>
        <dbReference type="ChEBI" id="CHEBI:60240"/>
    </ligand>
</feature>
<gene>
    <name evidence="1" type="primary">surE</name>
    <name type="ordered locus">HPG27_879</name>
</gene>
<reference key="1">
    <citation type="journal article" date="2009" name="J. Bacteriol.">
        <title>The complete genome sequence of Helicobacter pylori strain G27.</title>
        <authorList>
            <person name="Baltrus D.A."/>
            <person name="Amieva M.R."/>
            <person name="Covacci A."/>
            <person name="Lowe T.M."/>
            <person name="Merrell D.S."/>
            <person name="Ottemann K.M."/>
            <person name="Stein M."/>
            <person name="Salama N.R."/>
            <person name="Guillemin K."/>
        </authorList>
    </citation>
    <scope>NUCLEOTIDE SEQUENCE [LARGE SCALE GENOMIC DNA]</scope>
    <source>
        <strain>G27</strain>
    </source>
</reference>
<proteinExistence type="inferred from homology"/>
<dbReference type="EC" id="3.1.3.5" evidence="1"/>
<dbReference type="EMBL" id="CP001173">
    <property type="protein sequence ID" value="ACI27633.1"/>
    <property type="molecule type" value="Genomic_DNA"/>
</dbReference>
<dbReference type="RefSeq" id="WP_000722444.1">
    <property type="nucleotide sequence ID" value="NC_011333.1"/>
</dbReference>
<dbReference type="SMR" id="B5Z7T4"/>
<dbReference type="KEGG" id="hpg:HPG27_879"/>
<dbReference type="HOGENOM" id="CLU_045192_1_3_7"/>
<dbReference type="Proteomes" id="UP000001735">
    <property type="component" value="Chromosome"/>
</dbReference>
<dbReference type="GO" id="GO:0005737">
    <property type="term" value="C:cytoplasm"/>
    <property type="evidence" value="ECO:0007669"/>
    <property type="project" value="UniProtKB-SubCell"/>
</dbReference>
<dbReference type="GO" id="GO:0008254">
    <property type="term" value="F:3'-nucleotidase activity"/>
    <property type="evidence" value="ECO:0007669"/>
    <property type="project" value="TreeGrafter"/>
</dbReference>
<dbReference type="GO" id="GO:0008253">
    <property type="term" value="F:5'-nucleotidase activity"/>
    <property type="evidence" value="ECO:0007669"/>
    <property type="project" value="UniProtKB-UniRule"/>
</dbReference>
<dbReference type="GO" id="GO:0004309">
    <property type="term" value="F:exopolyphosphatase activity"/>
    <property type="evidence" value="ECO:0007669"/>
    <property type="project" value="TreeGrafter"/>
</dbReference>
<dbReference type="GO" id="GO:0046872">
    <property type="term" value="F:metal ion binding"/>
    <property type="evidence" value="ECO:0007669"/>
    <property type="project" value="UniProtKB-UniRule"/>
</dbReference>
<dbReference type="GO" id="GO:0000166">
    <property type="term" value="F:nucleotide binding"/>
    <property type="evidence" value="ECO:0007669"/>
    <property type="project" value="UniProtKB-KW"/>
</dbReference>
<dbReference type="FunFam" id="3.40.1210.10:FF:000001">
    <property type="entry name" value="5'/3'-nucleotidase SurE"/>
    <property type="match status" value="1"/>
</dbReference>
<dbReference type="Gene3D" id="3.40.1210.10">
    <property type="entry name" value="Survival protein SurE-like phosphatase/nucleotidase"/>
    <property type="match status" value="1"/>
</dbReference>
<dbReference type="HAMAP" id="MF_00060">
    <property type="entry name" value="SurE"/>
    <property type="match status" value="1"/>
</dbReference>
<dbReference type="InterPro" id="IPR030048">
    <property type="entry name" value="SurE"/>
</dbReference>
<dbReference type="InterPro" id="IPR002828">
    <property type="entry name" value="SurE-like_Pase/nucleotidase"/>
</dbReference>
<dbReference type="InterPro" id="IPR036523">
    <property type="entry name" value="SurE-like_sf"/>
</dbReference>
<dbReference type="NCBIfam" id="NF001490">
    <property type="entry name" value="PRK00346.1-4"/>
    <property type="match status" value="1"/>
</dbReference>
<dbReference type="NCBIfam" id="NF001494">
    <property type="entry name" value="PRK00346.2-4"/>
    <property type="match status" value="1"/>
</dbReference>
<dbReference type="NCBIfam" id="TIGR00087">
    <property type="entry name" value="surE"/>
    <property type="match status" value="1"/>
</dbReference>
<dbReference type="PANTHER" id="PTHR30457">
    <property type="entry name" value="5'-NUCLEOTIDASE SURE"/>
    <property type="match status" value="1"/>
</dbReference>
<dbReference type="PANTHER" id="PTHR30457:SF12">
    <property type="entry name" value="5'_3'-NUCLEOTIDASE SURE"/>
    <property type="match status" value="1"/>
</dbReference>
<dbReference type="Pfam" id="PF01975">
    <property type="entry name" value="SurE"/>
    <property type="match status" value="1"/>
</dbReference>
<dbReference type="SUPFAM" id="SSF64167">
    <property type="entry name" value="SurE-like"/>
    <property type="match status" value="1"/>
</dbReference>
<comment type="function">
    <text evidence="1">Nucleotidase that shows phosphatase activity on nucleoside 5'-monophosphates.</text>
</comment>
<comment type="catalytic activity">
    <reaction evidence="1">
        <text>a ribonucleoside 5'-phosphate + H2O = a ribonucleoside + phosphate</text>
        <dbReference type="Rhea" id="RHEA:12484"/>
        <dbReference type="ChEBI" id="CHEBI:15377"/>
        <dbReference type="ChEBI" id="CHEBI:18254"/>
        <dbReference type="ChEBI" id="CHEBI:43474"/>
        <dbReference type="ChEBI" id="CHEBI:58043"/>
        <dbReference type="EC" id="3.1.3.5"/>
    </reaction>
</comment>
<comment type="cofactor">
    <cofactor evidence="1">
        <name>a divalent metal cation</name>
        <dbReference type="ChEBI" id="CHEBI:60240"/>
    </cofactor>
    <text evidence="1">Binds 1 divalent metal cation per subunit.</text>
</comment>
<comment type="subcellular location">
    <subcellularLocation>
        <location evidence="1">Cytoplasm</location>
    </subcellularLocation>
</comment>
<comment type="similarity">
    <text evidence="1">Belongs to the SurE nucleotidase family.</text>
</comment>
<name>SURE_HELPG</name>